<accession>C7ZA26</accession>
<protein>
    <recommendedName>
        <fullName evidence="1">Translation factor GUF1, mitochondrial</fullName>
        <ecNumber>3.6.5.-</ecNumber>
    </recommendedName>
    <alternativeName>
        <fullName evidence="1">Elongation factor 4 homolog</fullName>
        <shortName evidence="1">EF-4</shortName>
    </alternativeName>
    <alternativeName>
        <fullName evidence="1">GTPase GUF1</fullName>
    </alternativeName>
    <alternativeName>
        <fullName evidence="1">Ribosomal back-translocase</fullName>
    </alternativeName>
</protein>
<organism>
    <name type="scientific">Fusarium vanettenii (strain ATCC MYA-4622 / CBS 123669 / FGSC 9596 / NRRL 45880 / 77-13-4)</name>
    <name type="common">Fusarium solani subsp. pisi</name>
    <dbReference type="NCBI Taxonomy" id="660122"/>
    <lineage>
        <taxon>Eukaryota</taxon>
        <taxon>Fungi</taxon>
        <taxon>Dikarya</taxon>
        <taxon>Ascomycota</taxon>
        <taxon>Pezizomycotina</taxon>
        <taxon>Sordariomycetes</taxon>
        <taxon>Hypocreomycetidae</taxon>
        <taxon>Hypocreales</taxon>
        <taxon>Nectriaceae</taxon>
        <taxon>Fusarium</taxon>
        <taxon>Fusarium solani species complex</taxon>
        <taxon>Fusarium vanettenii</taxon>
    </lineage>
</organism>
<name>GUF1_FUSV7</name>
<reference key="1">
    <citation type="journal article" date="2009" name="PLoS Genet.">
        <title>The genome of Nectria haematococca: contribution of supernumerary chromosomes to gene expansion.</title>
        <authorList>
            <person name="Coleman J.J."/>
            <person name="Rounsley S.D."/>
            <person name="Rodriguez-Carres M."/>
            <person name="Kuo A."/>
            <person name="Wasmann C.C."/>
            <person name="Grimwood J."/>
            <person name="Schmutz J."/>
            <person name="Taga M."/>
            <person name="White G.J."/>
            <person name="Zhou S."/>
            <person name="Schwartz D.C."/>
            <person name="Freitag M."/>
            <person name="Ma L.-J."/>
            <person name="Danchin E.G.J."/>
            <person name="Henrissat B."/>
            <person name="Coutinho P.M."/>
            <person name="Nelson D.R."/>
            <person name="Straney D."/>
            <person name="Napoli C.A."/>
            <person name="Barker B.M."/>
            <person name="Gribskov M."/>
            <person name="Rep M."/>
            <person name="Kroken S."/>
            <person name="Molnar I."/>
            <person name="Rensing C."/>
            <person name="Kennell J.C."/>
            <person name="Zamora J."/>
            <person name="Farman M.L."/>
            <person name="Selker E.U."/>
            <person name="Salamov A."/>
            <person name="Shapiro H."/>
            <person name="Pangilinan J."/>
            <person name="Lindquist E."/>
            <person name="Lamers C."/>
            <person name="Grigoriev I.V."/>
            <person name="Geiser D.M."/>
            <person name="Covert S.F."/>
            <person name="Temporini E."/>
            <person name="VanEtten H.D."/>
        </authorList>
    </citation>
    <scope>NUCLEOTIDE SEQUENCE [LARGE SCALE GENOMIC DNA]</scope>
    <source>
        <strain>ATCC MYA-4622 / CBS 123669 / FGSC 9596 / NRRL 45880 / 77-13-4</strain>
    </source>
</reference>
<proteinExistence type="inferred from homology"/>
<evidence type="ECO:0000255" key="1">
    <source>
        <dbReference type="HAMAP-Rule" id="MF_03137"/>
    </source>
</evidence>
<evidence type="ECO:0000305" key="2"/>
<feature type="transit peptide" description="Mitochondrion" evidence="1">
    <location>
        <begin position="1"/>
        <end position="16"/>
    </location>
</feature>
<feature type="chain" id="PRO_0000402892" description="Translation factor GUF1, mitochondrial">
    <location>
        <begin position="17"/>
        <end position="627"/>
    </location>
</feature>
<feature type="domain" description="tr-type G">
    <location>
        <begin position="40"/>
        <end position="221"/>
    </location>
</feature>
<feature type="binding site" evidence="1">
    <location>
        <begin position="49"/>
        <end position="56"/>
    </location>
    <ligand>
        <name>GTP</name>
        <dbReference type="ChEBI" id="CHEBI:37565"/>
    </ligand>
</feature>
<feature type="binding site" evidence="1">
    <location>
        <begin position="114"/>
        <end position="118"/>
    </location>
    <ligand>
        <name>GTP</name>
        <dbReference type="ChEBI" id="CHEBI:37565"/>
    </ligand>
</feature>
<feature type="binding site" evidence="1">
    <location>
        <begin position="168"/>
        <end position="171"/>
    </location>
    <ligand>
        <name>GTP</name>
        <dbReference type="ChEBI" id="CHEBI:37565"/>
    </ligand>
</feature>
<sequence>MSLAWSAGRAWSRQSYAAPPAAAKTPPSELEARIAAIPIERYRNFCIVAHIDHGKSTLSDRLLEYTGTISASDANKQILDKLDVERERGITVKAQTCTMIHNHEGEDYLLHLVDTPGHVDFRAEVTRSYASCGGALLLVDATQGIQAQTVSNFHLAFAQDLALVPVVNKIDMPAADIPRVLEQMQNSFELDPKDAIMLSAKTGKGVPNVLPAVIERIPHPVGDEKKPLKMLLVDSWYDNFRGVVLLVRLFDGTIKTGDNVISLGTGMKYTVGQVGIQYPHATPTKVLRAGQVGYVYFNPGMKKIQDAKLGDTFTFVGAEDNVEPCPGFEEPKPMVFVAAFPTDQSDYSRLADSINQLVLNDRSVTLQKDFSEALGSGWRLGFLGSLHCSVFQDRLRQEHGKSVILTEPTVPSKIIWPDGSEEVVQNPALFPDVSHPRIRGAQLFEPFVTATITMPEEYLGRVIELCEANRGEQKSLEFFHTTQVILQYEIPAAQLVDDLFGKLKSATKGYATLDYEDSGWRQSHLVKLQLLVNRQPVDAICRVVHSSQVDRLGRQWVTKFKEHVDRQHFEVVIQATAGNRIVARETIKPFRKDVLAKLHAADVSRRRKLLEKQKEGRKRLRASFMSR</sequence>
<gene>
    <name evidence="1" type="primary">GUF1</name>
    <name type="ORF">NECHADRAFT_94619</name>
</gene>
<keyword id="KW-0342">GTP-binding</keyword>
<keyword id="KW-0378">Hydrolase</keyword>
<keyword id="KW-0472">Membrane</keyword>
<keyword id="KW-0496">Mitochondrion</keyword>
<keyword id="KW-0999">Mitochondrion inner membrane</keyword>
<keyword id="KW-0547">Nucleotide-binding</keyword>
<keyword id="KW-0648">Protein biosynthesis</keyword>
<keyword id="KW-1185">Reference proteome</keyword>
<keyword id="KW-0809">Transit peptide</keyword>
<comment type="function">
    <text evidence="1">Promotes mitochondrial protein synthesis. May act as a fidelity factor of the translation reaction, by catalyzing a one-codon backward translocation of tRNAs on improperly translocated ribosomes. Binds to mitochondrial ribosomes in a GTP-dependent manner.</text>
</comment>
<comment type="catalytic activity">
    <reaction evidence="1">
        <text>GTP + H2O = GDP + phosphate + H(+)</text>
        <dbReference type="Rhea" id="RHEA:19669"/>
        <dbReference type="ChEBI" id="CHEBI:15377"/>
        <dbReference type="ChEBI" id="CHEBI:15378"/>
        <dbReference type="ChEBI" id="CHEBI:37565"/>
        <dbReference type="ChEBI" id="CHEBI:43474"/>
        <dbReference type="ChEBI" id="CHEBI:58189"/>
    </reaction>
</comment>
<comment type="subcellular location">
    <subcellularLocation>
        <location evidence="1">Mitochondrion inner membrane</location>
        <topology evidence="1">Peripheral membrane protein</topology>
        <orientation evidence="1">Matrix side</orientation>
    </subcellularLocation>
</comment>
<comment type="similarity">
    <text evidence="2">Belongs to the TRAFAC class translation factor GTPase superfamily. Classic translation factor GTPase family. LepA subfamily.</text>
</comment>
<dbReference type="EC" id="3.6.5.-"/>
<dbReference type="EMBL" id="GG698912">
    <property type="protein sequence ID" value="EEU39604.1"/>
    <property type="molecule type" value="Genomic_DNA"/>
</dbReference>
<dbReference type="RefSeq" id="XP_003045317.1">
    <property type="nucleotide sequence ID" value="XM_003045271.1"/>
</dbReference>
<dbReference type="SMR" id="C7ZA26"/>
<dbReference type="FunCoup" id="C7ZA26">
    <property type="interactions" value="728"/>
</dbReference>
<dbReference type="STRING" id="660122.C7ZA26"/>
<dbReference type="EnsemblFungi" id="NechaT94619">
    <property type="protein sequence ID" value="NechaP94619"/>
    <property type="gene ID" value="NechaG94619"/>
</dbReference>
<dbReference type="GeneID" id="9672096"/>
<dbReference type="KEGG" id="nhe:NECHADRAFT_94619"/>
<dbReference type="VEuPathDB" id="FungiDB:NECHADRAFT_94619"/>
<dbReference type="eggNOG" id="KOG0462">
    <property type="taxonomic scope" value="Eukaryota"/>
</dbReference>
<dbReference type="HOGENOM" id="CLU_009995_3_1_1"/>
<dbReference type="InParanoid" id="C7ZA26"/>
<dbReference type="OMA" id="QVKCDEN"/>
<dbReference type="OrthoDB" id="1074at2759"/>
<dbReference type="Proteomes" id="UP000005206">
    <property type="component" value="Unassembled WGS sequence"/>
</dbReference>
<dbReference type="GO" id="GO:0005743">
    <property type="term" value="C:mitochondrial inner membrane"/>
    <property type="evidence" value="ECO:0007669"/>
    <property type="project" value="UniProtKB-SubCell"/>
</dbReference>
<dbReference type="GO" id="GO:0005759">
    <property type="term" value="C:mitochondrial matrix"/>
    <property type="evidence" value="ECO:0007669"/>
    <property type="project" value="UniProtKB-UniRule"/>
</dbReference>
<dbReference type="GO" id="GO:0005525">
    <property type="term" value="F:GTP binding"/>
    <property type="evidence" value="ECO:0007669"/>
    <property type="project" value="UniProtKB-UniRule"/>
</dbReference>
<dbReference type="GO" id="GO:0003924">
    <property type="term" value="F:GTPase activity"/>
    <property type="evidence" value="ECO:0007669"/>
    <property type="project" value="UniProtKB-UniRule"/>
</dbReference>
<dbReference type="GO" id="GO:0097177">
    <property type="term" value="F:mitochondrial ribosome binding"/>
    <property type="evidence" value="ECO:0007669"/>
    <property type="project" value="EnsemblFungi"/>
</dbReference>
<dbReference type="GO" id="GO:0045727">
    <property type="term" value="P:positive regulation of translation"/>
    <property type="evidence" value="ECO:0007669"/>
    <property type="project" value="UniProtKB-UniRule"/>
</dbReference>
<dbReference type="GO" id="GO:0006412">
    <property type="term" value="P:translation"/>
    <property type="evidence" value="ECO:0007669"/>
    <property type="project" value="UniProtKB-KW"/>
</dbReference>
<dbReference type="CDD" id="cd03699">
    <property type="entry name" value="EF4_II"/>
    <property type="match status" value="1"/>
</dbReference>
<dbReference type="CDD" id="cd01890">
    <property type="entry name" value="LepA"/>
    <property type="match status" value="1"/>
</dbReference>
<dbReference type="CDD" id="cd03709">
    <property type="entry name" value="lepA_C"/>
    <property type="match status" value="1"/>
</dbReference>
<dbReference type="FunFam" id="3.40.50.300:FF:000078">
    <property type="entry name" value="Elongation factor 4"/>
    <property type="match status" value="1"/>
</dbReference>
<dbReference type="FunFam" id="2.40.30.10:FF:000015">
    <property type="entry name" value="Translation factor GUF1, mitochondrial"/>
    <property type="match status" value="1"/>
</dbReference>
<dbReference type="FunFam" id="3.30.70.240:FF:000007">
    <property type="entry name" value="Translation factor GUF1, mitochondrial"/>
    <property type="match status" value="1"/>
</dbReference>
<dbReference type="FunFam" id="3.30.70.2570:FF:000001">
    <property type="entry name" value="Translation factor GUF1, mitochondrial"/>
    <property type="match status" value="1"/>
</dbReference>
<dbReference type="FunFam" id="3.30.70.870:FF:000004">
    <property type="entry name" value="Translation factor GUF1, mitochondrial"/>
    <property type="match status" value="1"/>
</dbReference>
<dbReference type="Gene3D" id="3.30.70.240">
    <property type="match status" value="1"/>
</dbReference>
<dbReference type="Gene3D" id="3.30.70.2570">
    <property type="entry name" value="Elongation factor 4, C-terminal domain"/>
    <property type="match status" value="1"/>
</dbReference>
<dbReference type="Gene3D" id="3.30.70.870">
    <property type="entry name" value="Elongation Factor G (Translational Gtpase), domain 3"/>
    <property type="match status" value="1"/>
</dbReference>
<dbReference type="Gene3D" id="3.40.50.300">
    <property type="entry name" value="P-loop containing nucleotide triphosphate hydrolases"/>
    <property type="match status" value="1"/>
</dbReference>
<dbReference type="Gene3D" id="2.40.30.10">
    <property type="entry name" value="Translation factors"/>
    <property type="match status" value="1"/>
</dbReference>
<dbReference type="HAMAP" id="MF_00071">
    <property type="entry name" value="LepA"/>
    <property type="match status" value="1"/>
</dbReference>
<dbReference type="InterPro" id="IPR006297">
    <property type="entry name" value="EF-4"/>
</dbReference>
<dbReference type="InterPro" id="IPR035647">
    <property type="entry name" value="EFG_III/V"/>
</dbReference>
<dbReference type="InterPro" id="IPR000640">
    <property type="entry name" value="EFG_V-like"/>
</dbReference>
<dbReference type="InterPro" id="IPR004161">
    <property type="entry name" value="EFTu-like_2"/>
</dbReference>
<dbReference type="InterPro" id="IPR031157">
    <property type="entry name" value="G_TR_CS"/>
</dbReference>
<dbReference type="InterPro" id="IPR038363">
    <property type="entry name" value="LepA_C_sf"/>
</dbReference>
<dbReference type="InterPro" id="IPR013842">
    <property type="entry name" value="LepA_CTD"/>
</dbReference>
<dbReference type="InterPro" id="IPR035654">
    <property type="entry name" value="LepA_IV"/>
</dbReference>
<dbReference type="InterPro" id="IPR027417">
    <property type="entry name" value="P-loop_NTPase"/>
</dbReference>
<dbReference type="InterPro" id="IPR005225">
    <property type="entry name" value="Small_GTP-bd"/>
</dbReference>
<dbReference type="InterPro" id="IPR000795">
    <property type="entry name" value="T_Tr_GTP-bd_dom"/>
</dbReference>
<dbReference type="NCBIfam" id="TIGR01393">
    <property type="entry name" value="lepA"/>
    <property type="match status" value="1"/>
</dbReference>
<dbReference type="NCBIfam" id="TIGR00231">
    <property type="entry name" value="small_GTP"/>
    <property type="match status" value="1"/>
</dbReference>
<dbReference type="PANTHER" id="PTHR43512:SF7">
    <property type="entry name" value="TRANSLATION FACTOR GUF1, MITOCHONDRIAL"/>
    <property type="match status" value="1"/>
</dbReference>
<dbReference type="PANTHER" id="PTHR43512">
    <property type="entry name" value="TRANSLATION FACTOR GUF1-RELATED"/>
    <property type="match status" value="1"/>
</dbReference>
<dbReference type="Pfam" id="PF00679">
    <property type="entry name" value="EFG_C"/>
    <property type="match status" value="1"/>
</dbReference>
<dbReference type="Pfam" id="PF00009">
    <property type="entry name" value="GTP_EFTU"/>
    <property type="match status" value="1"/>
</dbReference>
<dbReference type="Pfam" id="PF03144">
    <property type="entry name" value="GTP_EFTU_D2"/>
    <property type="match status" value="1"/>
</dbReference>
<dbReference type="Pfam" id="PF06421">
    <property type="entry name" value="LepA_C"/>
    <property type="match status" value="1"/>
</dbReference>
<dbReference type="PRINTS" id="PR00315">
    <property type="entry name" value="ELONGATNFCT"/>
</dbReference>
<dbReference type="SUPFAM" id="SSF54980">
    <property type="entry name" value="EF-G C-terminal domain-like"/>
    <property type="match status" value="2"/>
</dbReference>
<dbReference type="SUPFAM" id="SSF52540">
    <property type="entry name" value="P-loop containing nucleoside triphosphate hydrolases"/>
    <property type="match status" value="1"/>
</dbReference>
<dbReference type="PROSITE" id="PS00301">
    <property type="entry name" value="G_TR_1"/>
    <property type="match status" value="1"/>
</dbReference>
<dbReference type="PROSITE" id="PS51722">
    <property type="entry name" value="G_TR_2"/>
    <property type="match status" value="1"/>
</dbReference>